<proteinExistence type="inferred from homology"/>
<dbReference type="EC" id="2.7.7.38" evidence="1"/>
<dbReference type="EMBL" id="CP001172">
    <property type="protein sequence ID" value="ACJ57020.1"/>
    <property type="molecule type" value="Genomic_DNA"/>
</dbReference>
<dbReference type="RefSeq" id="WP_000680692.1">
    <property type="nucleotide sequence ID" value="NZ_CP001172.1"/>
</dbReference>
<dbReference type="SMR" id="B7H3M4"/>
<dbReference type="HOGENOM" id="CLU_065038_1_0_6"/>
<dbReference type="UniPathway" id="UPA00030"/>
<dbReference type="UniPathway" id="UPA00358">
    <property type="reaction ID" value="UER00476"/>
</dbReference>
<dbReference type="Proteomes" id="UP000006924">
    <property type="component" value="Chromosome"/>
</dbReference>
<dbReference type="GO" id="GO:0005829">
    <property type="term" value="C:cytosol"/>
    <property type="evidence" value="ECO:0007669"/>
    <property type="project" value="TreeGrafter"/>
</dbReference>
<dbReference type="GO" id="GO:0008690">
    <property type="term" value="F:3-deoxy-manno-octulosonate cytidylyltransferase activity"/>
    <property type="evidence" value="ECO:0007669"/>
    <property type="project" value="UniProtKB-UniRule"/>
</dbReference>
<dbReference type="GO" id="GO:0033468">
    <property type="term" value="P:CMP-keto-3-deoxy-D-manno-octulosonic acid biosynthetic process"/>
    <property type="evidence" value="ECO:0007669"/>
    <property type="project" value="UniProtKB-UniRule"/>
</dbReference>
<dbReference type="GO" id="GO:0009103">
    <property type="term" value="P:lipopolysaccharide biosynthetic process"/>
    <property type="evidence" value="ECO:0007669"/>
    <property type="project" value="UniProtKB-UniRule"/>
</dbReference>
<dbReference type="CDD" id="cd02517">
    <property type="entry name" value="CMP-KDO-Synthetase"/>
    <property type="match status" value="1"/>
</dbReference>
<dbReference type="FunFam" id="3.90.550.10:FF:000011">
    <property type="entry name" value="3-deoxy-manno-octulosonate cytidylyltransferase"/>
    <property type="match status" value="1"/>
</dbReference>
<dbReference type="Gene3D" id="3.90.550.10">
    <property type="entry name" value="Spore Coat Polysaccharide Biosynthesis Protein SpsA, Chain A"/>
    <property type="match status" value="1"/>
</dbReference>
<dbReference type="HAMAP" id="MF_00057">
    <property type="entry name" value="KdsB"/>
    <property type="match status" value="1"/>
</dbReference>
<dbReference type="InterPro" id="IPR003329">
    <property type="entry name" value="Cytidylyl_trans"/>
</dbReference>
<dbReference type="InterPro" id="IPR004528">
    <property type="entry name" value="KdsB"/>
</dbReference>
<dbReference type="InterPro" id="IPR029044">
    <property type="entry name" value="Nucleotide-diphossugar_trans"/>
</dbReference>
<dbReference type="NCBIfam" id="TIGR00466">
    <property type="entry name" value="kdsB"/>
    <property type="match status" value="1"/>
</dbReference>
<dbReference type="NCBIfam" id="NF003950">
    <property type="entry name" value="PRK05450.1-3"/>
    <property type="match status" value="1"/>
</dbReference>
<dbReference type="NCBIfam" id="NF003952">
    <property type="entry name" value="PRK05450.1-5"/>
    <property type="match status" value="1"/>
</dbReference>
<dbReference type="NCBIfam" id="NF009905">
    <property type="entry name" value="PRK13368.1"/>
    <property type="match status" value="1"/>
</dbReference>
<dbReference type="PANTHER" id="PTHR42866">
    <property type="entry name" value="3-DEOXY-MANNO-OCTULOSONATE CYTIDYLYLTRANSFERASE"/>
    <property type="match status" value="1"/>
</dbReference>
<dbReference type="PANTHER" id="PTHR42866:SF2">
    <property type="entry name" value="3-DEOXY-MANNO-OCTULOSONATE CYTIDYLYLTRANSFERASE, MITOCHONDRIAL"/>
    <property type="match status" value="1"/>
</dbReference>
<dbReference type="Pfam" id="PF02348">
    <property type="entry name" value="CTP_transf_3"/>
    <property type="match status" value="1"/>
</dbReference>
<dbReference type="SUPFAM" id="SSF53448">
    <property type="entry name" value="Nucleotide-diphospho-sugar transferases"/>
    <property type="match status" value="1"/>
</dbReference>
<comment type="function">
    <text evidence="1">Activates KDO (a required 8-carbon sugar) for incorporation into bacterial lipopolysaccharide in Gram-negative bacteria.</text>
</comment>
<comment type="catalytic activity">
    <reaction evidence="1">
        <text>3-deoxy-alpha-D-manno-oct-2-ulosonate + CTP = CMP-3-deoxy-beta-D-manno-octulosonate + diphosphate</text>
        <dbReference type="Rhea" id="RHEA:23448"/>
        <dbReference type="ChEBI" id="CHEBI:33019"/>
        <dbReference type="ChEBI" id="CHEBI:37563"/>
        <dbReference type="ChEBI" id="CHEBI:85986"/>
        <dbReference type="ChEBI" id="CHEBI:85987"/>
        <dbReference type="EC" id="2.7.7.38"/>
    </reaction>
</comment>
<comment type="pathway">
    <text evidence="1">Nucleotide-sugar biosynthesis; CMP-3-deoxy-D-manno-octulosonate biosynthesis; CMP-3-deoxy-D-manno-octulosonate from 3-deoxy-D-manno-octulosonate and CTP: step 1/1.</text>
</comment>
<comment type="pathway">
    <text evidence="1">Bacterial outer membrane biogenesis; lipopolysaccharide biosynthesis.</text>
</comment>
<comment type="subcellular location">
    <subcellularLocation>
        <location evidence="1">Cytoplasm</location>
    </subcellularLocation>
</comment>
<comment type="similarity">
    <text evidence="1">Belongs to the KdsB family.</text>
</comment>
<name>KDSB_ACIB3</name>
<reference key="1">
    <citation type="journal article" date="2008" name="J. Bacteriol.">
        <title>Comparative genome sequence analysis of multidrug-resistant Acinetobacter baumannii.</title>
        <authorList>
            <person name="Adams M.D."/>
            <person name="Goglin K."/>
            <person name="Molyneaux N."/>
            <person name="Hujer K.M."/>
            <person name="Lavender H."/>
            <person name="Jamison J.J."/>
            <person name="MacDonald I.J."/>
            <person name="Martin K.M."/>
            <person name="Russo T."/>
            <person name="Campagnari A.A."/>
            <person name="Hujer A.M."/>
            <person name="Bonomo R.A."/>
            <person name="Gill S.R."/>
        </authorList>
    </citation>
    <scope>NUCLEOTIDE SEQUENCE [LARGE SCALE GENOMIC DNA]</scope>
    <source>
        <strain>AB307-0294</strain>
    </source>
</reference>
<accession>B7H3M4</accession>
<evidence type="ECO:0000255" key="1">
    <source>
        <dbReference type="HAMAP-Rule" id="MF_00057"/>
    </source>
</evidence>
<sequence length="253" mass="28281">MKHIVIPARFSSSRLPGKPLLLIHDRPMILRVVDQAKKVEGFDDLCVATDDERIAEICCAEGVDVVLTSADHPSGTDRLSEVARIKGWDADDIIVNVQGDEPLLPAQLVQQVAKLLVDKPNCSMSTLCEPIHALDEFQRDSIVKVVMSKQNEALYFSRATIPYDRDSAKQAEPTLHSQAFRHLGLYAYRVSLLQEYVTWEMGKLEKLESLEQLRVLENGHRIAIAVAEANLPPGVDTQADLDRLNNMPVESFE</sequence>
<keyword id="KW-0963">Cytoplasm</keyword>
<keyword id="KW-0448">Lipopolysaccharide biosynthesis</keyword>
<keyword id="KW-0548">Nucleotidyltransferase</keyword>
<keyword id="KW-0808">Transferase</keyword>
<gene>
    <name evidence="1" type="primary">kdsB</name>
    <name type="ordered locus">ABBFA_001919</name>
</gene>
<protein>
    <recommendedName>
        <fullName evidence="1">3-deoxy-manno-octulosonate cytidylyltransferase</fullName>
        <ecNumber evidence="1">2.7.7.38</ecNumber>
    </recommendedName>
    <alternativeName>
        <fullName evidence="1">CMP-2-keto-3-deoxyoctulosonic acid synthase</fullName>
        <shortName evidence="1">CKS</shortName>
        <shortName evidence="1">CMP-KDO synthase</shortName>
    </alternativeName>
</protein>
<organism>
    <name type="scientific">Acinetobacter baumannii (strain AB307-0294)</name>
    <dbReference type="NCBI Taxonomy" id="557600"/>
    <lineage>
        <taxon>Bacteria</taxon>
        <taxon>Pseudomonadati</taxon>
        <taxon>Pseudomonadota</taxon>
        <taxon>Gammaproteobacteria</taxon>
        <taxon>Moraxellales</taxon>
        <taxon>Moraxellaceae</taxon>
        <taxon>Acinetobacter</taxon>
        <taxon>Acinetobacter calcoaceticus/baumannii complex</taxon>
    </lineage>
</organism>
<feature type="chain" id="PRO_0000369983" description="3-deoxy-manno-octulosonate cytidylyltransferase">
    <location>
        <begin position="1"/>
        <end position="253"/>
    </location>
</feature>